<keyword id="KW-1003">Cell membrane</keyword>
<keyword id="KW-0325">Glycoprotein</keyword>
<keyword id="KW-0336">GPI-anchor</keyword>
<keyword id="KW-0449">Lipoprotein</keyword>
<keyword id="KW-0469">Meiosis</keyword>
<keyword id="KW-0472">Membrane</keyword>
<keyword id="KW-1185">Reference proteome</keyword>
<keyword id="KW-0732">Signal</keyword>
<keyword id="KW-0749">Sporulation</keyword>
<proteinExistence type="evidence at protein level"/>
<feature type="signal peptide" evidence="1">
    <location>
        <begin position="1"/>
        <end position="56"/>
    </location>
</feature>
<feature type="chain" id="PRO_0000033195" description="Sporulation-specific protein 2">
    <location>
        <begin position="57"/>
        <end position="475"/>
    </location>
</feature>
<feature type="propeptide" id="PRO_0000277471" description="Removed in mature form" evidence="1">
    <location>
        <begin position="476"/>
        <end position="502"/>
    </location>
</feature>
<feature type="region of interest" description="Disordered" evidence="2">
    <location>
        <begin position="441"/>
        <end position="474"/>
    </location>
</feature>
<feature type="compositionally biased region" description="Basic and acidic residues" evidence="2">
    <location>
        <begin position="448"/>
        <end position="461"/>
    </location>
</feature>
<feature type="lipid moiety-binding region" description="GPI-anchor amidated asparagine" evidence="1">
    <location>
        <position position="475"/>
    </location>
</feature>
<feature type="glycosylation site" description="N-linked (GlcNAc...) asparagine" evidence="1">
    <location>
        <position position="77"/>
    </location>
</feature>
<feature type="glycosylation site" description="N-linked (GlcNAc...) asparagine" evidence="1">
    <location>
        <position position="135"/>
    </location>
</feature>
<feature type="glycosylation site" description="N-linked (GlcNAc...) asparagine" evidence="1">
    <location>
        <position position="285"/>
    </location>
</feature>
<feature type="glycosylation site" description="N-linked (GlcNAc...) asparagine" evidence="1">
    <location>
        <position position="303"/>
    </location>
</feature>
<feature type="glycosylation site" description="N-linked (GlcNAc...) asparagine" evidence="1">
    <location>
        <position position="340"/>
    </location>
</feature>
<feature type="glycosylation site" description="N-linked (GlcNAc...) asparagine" evidence="1">
    <location>
        <position position="343"/>
    </location>
</feature>
<feature type="glycosylation site" description="N-linked (GlcNAc...) asparagine" evidence="1">
    <location>
        <position position="355"/>
    </location>
</feature>
<feature type="sequence conflict" description="In Ref. 1; AAA35080." evidence="7" ref="1">
    <original>P</original>
    <variation>L</variation>
    <location>
        <position position="203"/>
    </location>
</feature>
<feature type="sequence conflict" description="In Ref. 1; AAA35080." evidence="7" ref="1">
    <original>I</original>
    <variation>S</variation>
    <location>
        <position position="210"/>
    </location>
</feature>
<feature type="sequence conflict" description="In Ref. 1; AAA35080." evidence="7" ref="1">
    <original>V</original>
    <variation>G</variation>
    <location>
        <position position="324"/>
    </location>
</feature>
<reference key="1">
    <citation type="journal article" date="1997" name="Nature">
        <title>The nucleotide sequence of Saccharomyces cerevisiae chromosome IV.</title>
        <authorList>
            <person name="Jacq C."/>
            <person name="Alt-Moerbe J."/>
            <person name="Andre B."/>
            <person name="Arnold W."/>
            <person name="Bahr A."/>
            <person name="Ballesta J.P.G."/>
            <person name="Bargues M."/>
            <person name="Baron L."/>
            <person name="Becker A."/>
            <person name="Biteau N."/>
            <person name="Bloecker H."/>
            <person name="Blugeon C."/>
            <person name="Boskovic J."/>
            <person name="Brandt P."/>
            <person name="Brueckner M."/>
            <person name="Buitrago M.J."/>
            <person name="Coster F."/>
            <person name="Delaveau T."/>
            <person name="del Rey F."/>
            <person name="Dujon B."/>
            <person name="Eide L.G."/>
            <person name="Garcia-Cantalejo J.M."/>
            <person name="Goffeau A."/>
            <person name="Gomez-Peris A."/>
            <person name="Granotier C."/>
            <person name="Hanemann V."/>
            <person name="Hankeln T."/>
            <person name="Hoheisel J.D."/>
            <person name="Jaeger W."/>
            <person name="Jimenez A."/>
            <person name="Jonniaux J.-L."/>
            <person name="Kraemer C."/>
            <person name="Kuester H."/>
            <person name="Laamanen P."/>
            <person name="Legros Y."/>
            <person name="Louis E.J."/>
            <person name="Moeller-Rieker S."/>
            <person name="Monnet A."/>
            <person name="Moro M."/>
            <person name="Mueller-Auer S."/>
            <person name="Nussbaumer B."/>
            <person name="Paricio N."/>
            <person name="Paulin L."/>
            <person name="Perea J."/>
            <person name="Perez-Alonso M."/>
            <person name="Perez-Ortin J.E."/>
            <person name="Pohl T.M."/>
            <person name="Prydz H."/>
            <person name="Purnelle B."/>
            <person name="Rasmussen S.W."/>
            <person name="Remacha M.A."/>
            <person name="Revuelta J.L."/>
            <person name="Rieger M."/>
            <person name="Salom D."/>
            <person name="Saluz H.P."/>
            <person name="Saiz J.E."/>
            <person name="Saren A.-M."/>
            <person name="Schaefer M."/>
            <person name="Scharfe M."/>
            <person name="Schmidt E.R."/>
            <person name="Schneider C."/>
            <person name="Scholler P."/>
            <person name="Schwarz S."/>
            <person name="Soler-Mira A."/>
            <person name="Urrestarazu L.A."/>
            <person name="Verhasselt P."/>
            <person name="Vissers S."/>
            <person name="Voet M."/>
            <person name="Volckaert G."/>
            <person name="Wagner G."/>
            <person name="Wambutt R."/>
            <person name="Wedler E."/>
            <person name="Wedler H."/>
            <person name="Woelfl S."/>
            <person name="Harris D.E."/>
            <person name="Bowman S."/>
            <person name="Brown D."/>
            <person name="Churcher C.M."/>
            <person name="Connor R."/>
            <person name="Dedman K."/>
            <person name="Gentles S."/>
            <person name="Hamlin N."/>
            <person name="Hunt S."/>
            <person name="Jones L."/>
            <person name="McDonald S."/>
            <person name="Murphy L.D."/>
            <person name="Niblett D."/>
            <person name="Odell C."/>
            <person name="Oliver K."/>
            <person name="Rajandream M.A."/>
            <person name="Richards C."/>
            <person name="Shore L."/>
            <person name="Walsh S.V."/>
            <person name="Barrell B.G."/>
            <person name="Dietrich F.S."/>
            <person name="Mulligan J.T."/>
            <person name="Allen E."/>
            <person name="Araujo R."/>
            <person name="Aviles E."/>
            <person name="Berno A."/>
            <person name="Carpenter J."/>
            <person name="Chen E."/>
            <person name="Cherry J.M."/>
            <person name="Chung E."/>
            <person name="Duncan M."/>
            <person name="Hunicke-Smith S."/>
            <person name="Hyman R.W."/>
            <person name="Komp C."/>
            <person name="Lashkari D."/>
            <person name="Lew H."/>
            <person name="Lin D."/>
            <person name="Mosedale D."/>
            <person name="Nakahara K."/>
            <person name="Namath A."/>
            <person name="Oefner P."/>
            <person name="Oh C."/>
            <person name="Petel F.X."/>
            <person name="Roberts D."/>
            <person name="Schramm S."/>
            <person name="Schroeder M."/>
            <person name="Shogren T."/>
            <person name="Shroff N."/>
            <person name="Winant A."/>
            <person name="Yelton M.A."/>
            <person name="Botstein D."/>
            <person name="Davis R.W."/>
            <person name="Johnston M."/>
            <person name="Andrews S."/>
            <person name="Brinkman R."/>
            <person name="Cooper J."/>
            <person name="Ding H."/>
            <person name="Du Z."/>
            <person name="Favello A."/>
            <person name="Fulton L."/>
            <person name="Gattung S."/>
            <person name="Greco T."/>
            <person name="Hallsworth K."/>
            <person name="Hawkins J."/>
            <person name="Hillier L.W."/>
            <person name="Jier M."/>
            <person name="Johnson D."/>
            <person name="Johnston L."/>
            <person name="Kirsten J."/>
            <person name="Kucaba T."/>
            <person name="Langston Y."/>
            <person name="Latreille P."/>
            <person name="Le T."/>
            <person name="Mardis E."/>
            <person name="Menezes S."/>
            <person name="Miller N."/>
            <person name="Nhan M."/>
            <person name="Pauley A."/>
            <person name="Peluso D."/>
            <person name="Rifkin L."/>
            <person name="Riles L."/>
            <person name="Taich A."/>
            <person name="Trevaskis E."/>
            <person name="Vignati D."/>
            <person name="Wilcox L."/>
            <person name="Wohldman P."/>
            <person name="Vaudin M."/>
            <person name="Wilson R."/>
            <person name="Waterston R."/>
            <person name="Albermann K."/>
            <person name="Hani J."/>
            <person name="Heumann K."/>
            <person name="Kleine K."/>
            <person name="Mewes H.-W."/>
            <person name="Zollner A."/>
            <person name="Zaccaria P."/>
        </authorList>
    </citation>
    <scope>NUCLEOTIDE SEQUENCE [LARGE SCALE GENOMIC DNA]</scope>
    <source>
        <strain>ATCC 204508 / S288c</strain>
    </source>
</reference>
<reference key="2">
    <citation type="journal article" date="2014" name="G3 (Bethesda)">
        <title>The reference genome sequence of Saccharomyces cerevisiae: Then and now.</title>
        <authorList>
            <person name="Engel S.R."/>
            <person name="Dietrich F.S."/>
            <person name="Fisk D.G."/>
            <person name="Binkley G."/>
            <person name="Balakrishnan R."/>
            <person name="Costanzo M.C."/>
            <person name="Dwight S.S."/>
            <person name="Hitz B.C."/>
            <person name="Karra K."/>
            <person name="Nash R.S."/>
            <person name="Weng S."/>
            <person name="Wong E.D."/>
            <person name="Lloyd P."/>
            <person name="Skrzypek M.S."/>
            <person name="Miyasato S.R."/>
            <person name="Simison M."/>
            <person name="Cherry J.M."/>
        </authorList>
    </citation>
    <scope>GENOME REANNOTATION</scope>
    <source>
        <strain>ATCC 204508 / S288c</strain>
    </source>
</reference>
<reference key="3">
    <citation type="journal article" date="1986" name="Mol. Cell. Biol.">
        <title>Characterization and mutational analysis of a cluster of three genes expressed preferentially during sporulation of Saccharomyces cerevisiae.</title>
        <authorList>
            <person name="Percival-Smith A."/>
            <person name="Segall J."/>
        </authorList>
    </citation>
    <scope>NUCLEOTIDE SEQUENCE [GENOMIC DNA] OF 34-502</scope>
</reference>
<reference key="4">
    <citation type="journal article" date="1987" name="Mol. Cell. Biol.">
        <title>Increased copy number of the 5' end of the SPS2 gene inhibits sporulation of Saccharomyces cerevisiae.</title>
        <authorList>
            <person name="Percival-Smith A."/>
            <person name="Segall J."/>
        </authorList>
    </citation>
    <scope>FUNCTION</scope>
</reference>
<reference key="5">
    <citation type="journal article" date="1995" name="Mol. Cell. Biol.">
        <title>Stimulation of later functions of the yeast meiotic protein kinase Ime2p by the IDS2 gene product.</title>
        <authorList>
            <person name="Sia R.A."/>
            <person name="Mitchell A.P."/>
        </authorList>
    </citation>
    <scope>FUNCTION</scope>
</reference>
<reference key="6">
    <citation type="journal article" date="2003" name="Nature">
        <title>Global analysis of protein expression in yeast.</title>
        <authorList>
            <person name="Ghaemmaghami S."/>
            <person name="Huh W.-K."/>
            <person name="Bower K."/>
            <person name="Howson R.W."/>
            <person name="Belle A."/>
            <person name="Dephoure N."/>
            <person name="O'Shea E.K."/>
            <person name="Weissman J.S."/>
        </authorList>
    </citation>
    <scope>LEVEL OF PROTEIN EXPRESSION [LARGE SCALE ANALYSIS]</scope>
</reference>
<reference key="7">
    <citation type="journal article" date="2004" name="Eukaryot. Cell">
        <title>Morphogenetic pathway of spore wall assembly in Saccharomyces cerevisiae.</title>
        <authorList>
            <person name="Coluccio A."/>
            <person name="Bogengruber E."/>
            <person name="Conrad M.N."/>
            <person name="Dresser M.E."/>
            <person name="Briza P."/>
            <person name="Neiman A.M."/>
        </authorList>
    </citation>
    <scope>FUNCTION</scope>
</reference>
<sequence length="502" mass="55939">MPIWKTQTFFTSISVIQIVNKETKVSTKKEKDSMLNQLNTILRFLFLFLQLIKSSAAVEPNGGPNILDHNIMLVNTNATIPKKEQTDFEVISPTKQTQVDEDCKKGLYHIENAGNLIELQAKCWKVVGNIEISSNYSGSLIDLGLIREIEGDLIIKNNKHIFRIQGYNLESLGKLELDSLTSFVSLDFPALKEVETVDWRVLPILSSVVINGNIKKIKNIIISDTALTSIDYFNNVKKVDIFNINNNRFLENLFASLESVTKQLTVHSNAKELELDLSNLHTVENMTIKDVSEIKLAKLSSVNSSLEFIENQFSSLELPLLAKVQGTLGLIDNKNLKKLNFSNATDIQGGLMIANNTELAKIDFFPKLRQIGGAIYFEGSFDKIDLPELKLVKGSAYIKSSSEELNCEEFTSPKAGRSIIRGGKIECTSGMKSKMLNVDEEGNVLGKQETDNDNGKKEKGKNGAKSQGSSKKMENSAPKNIFIDAFKMSVYAVFTVLFSIIF</sequence>
<organism>
    <name type="scientific">Saccharomyces cerevisiae (strain ATCC 204508 / S288c)</name>
    <name type="common">Baker's yeast</name>
    <dbReference type="NCBI Taxonomy" id="559292"/>
    <lineage>
        <taxon>Eukaryota</taxon>
        <taxon>Fungi</taxon>
        <taxon>Dikarya</taxon>
        <taxon>Ascomycota</taxon>
        <taxon>Saccharomycotina</taxon>
        <taxon>Saccharomycetes</taxon>
        <taxon>Saccharomycetales</taxon>
        <taxon>Saccharomycetaceae</taxon>
        <taxon>Saccharomyces</taxon>
    </lineage>
</organism>
<gene>
    <name type="primary">SPS2</name>
    <name type="ordered locus">YDR522C</name>
    <name type="ORF">D9719.26</name>
</gene>
<protein>
    <recommendedName>
        <fullName>Sporulation-specific protein 2</fullName>
    </recommendedName>
</protein>
<dbReference type="EMBL" id="U33057">
    <property type="protein sequence ID" value="AAB64962.1"/>
    <property type="molecule type" value="Genomic_DNA"/>
</dbReference>
<dbReference type="EMBL" id="M13629">
    <property type="protein sequence ID" value="AAA35080.1"/>
    <property type="molecule type" value="Genomic_DNA"/>
</dbReference>
<dbReference type="EMBL" id="BK006938">
    <property type="protein sequence ID" value="DAA12352.1"/>
    <property type="molecule type" value="Genomic_DNA"/>
</dbReference>
<dbReference type="PIR" id="S69578">
    <property type="entry name" value="S69578"/>
</dbReference>
<dbReference type="RefSeq" id="NP_010810.1">
    <property type="nucleotide sequence ID" value="NM_001180830.1"/>
</dbReference>
<dbReference type="SMR" id="P08459"/>
<dbReference type="BioGRID" id="32572">
    <property type="interactions" value="115"/>
</dbReference>
<dbReference type="DIP" id="DIP-7764N"/>
<dbReference type="FunCoup" id="P08459">
    <property type="interactions" value="65"/>
</dbReference>
<dbReference type="IntAct" id="P08459">
    <property type="interactions" value="4"/>
</dbReference>
<dbReference type="STRING" id="4932.YDR522C"/>
<dbReference type="GlyCosmos" id="P08459">
    <property type="glycosylation" value="7 sites, No reported glycans"/>
</dbReference>
<dbReference type="GlyGen" id="P08459">
    <property type="glycosylation" value="7 sites"/>
</dbReference>
<dbReference type="PaxDb" id="4932-YDR522C"/>
<dbReference type="PeptideAtlas" id="P08459"/>
<dbReference type="EnsemblFungi" id="YDR522C_mRNA">
    <property type="protein sequence ID" value="YDR522C"/>
    <property type="gene ID" value="YDR522C"/>
</dbReference>
<dbReference type="GeneID" id="852134"/>
<dbReference type="KEGG" id="sce:YDR522C"/>
<dbReference type="AGR" id="SGD:S000002930"/>
<dbReference type="SGD" id="S000002930">
    <property type="gene designation" value="SPS2"/>
</dbReference>
<dbReference type="VEuPathDB" id="FungiDB:YDR522C"/>
<dbReference type="eggNOG" id="ENOG502QT4Q">
    <property type="taxonomic scope" value="Eukaryota"/>
</dbReference>
<dbReference type="GeneTree" id="ENSGT00940000176339"/>
<dbReference type="HOGENOM" id="CLU_035846_2_1_1"/>
<dbReference type="InParanoid" id="P08459"/>
<dbReference type="OMA" id="ELNCEEF"/>
<dbReference type="OrthoDB" id="536881at2759"/>
<dbReference type="BioCyc" id="YEAST:G3O-30038-MONOMER"/>
<dbReference type="BioGRID-ORCS" id="852134">
    <property type="hits" value="0 hits in 10 CRISPR screens"/>
</dbReference>
<dbReference type="PRO" id="PR:P08459"/>
<dbReference type="Proteomes" id="UP000002311">
    <property type="component" value="Chromosome IV"/>
</dbReference>
<dbReference type="RNAct" id="P08459">
    <property type="molecule type" value="protein"/>
</dbReference>
<dbReference type="GO" id="GO:0009277">
    <property type="term" value="C:fungal-type cell wall"/>
    <property type="evidence" value="ECO:0000314"/>
    <property type="project" value="SGD"/>
</dbReference>
<dbReference type="GO" id="GO:0005886">
    <property type="term" value="C:plasma membrane"/>
    <property type="evidence" value="ECO:0007005"/>
    <property type="project" value="SGD"/>
</dbReference>
<dbReference type="GO" id="GO:0098552">
    <property type="term" value="C:side of membrane"/>
    <property type="evidence" value="ECO:0007669"/>
    <property type="project" value="UniProtKB-KW"/>
</dbReference>
<dbReference type="GO" id="GO:0030476">
    <property type="term" value="P:ascospore wall assembly"/>
    <property type="evidence" value="ECO:0000315"/>
    <property type="project" value="SGD"/>
</dbReference>
<dbReference type="Gene3D" id="3.80.20.20">
    <property type="entry name" value="Receptor L-domain"/>
    <property type="match status" value="1"/>
</dbReference>
<dbReference type="InterPro" id="IPR051648">
    <property type="entry name" value="CWI-Assembly_Regulator"/>
</dbReference>
<dbReference type="InterPro" id="IPR036941">
    <property type="entry name" value="Rcpt_L-dom_sf"/>
</dbReference>
<dbReference type="PANTHER" id="PTHR31018:SF12">
    <property type="entry name" value="SPORULATION-SPECIFIC PROTEIN 2-RELATED"/>
    <property type="match status" value="1"/>
</dbReference>
<dbReference type="PANTHER" id="PTHR31018">
    <property type="entry name" value="SPORULATION-SPECIFIC PROTEIN-RELATED"/>
    <property type="match status" value="1"/>
</dbReference>
<dbReference type="SUPFAM" id="SSF52058">
    <property type="entry name" value="L domain-like"/>
    <property type="match status" value="2"/>
</dbReference>
<comment type="function">
    <text evidence="4 5 6">Involved in middle stages of meiosis. Redundant with SPS22 for the organization of the beta-glucan layer of the spore wall.</text>
</comment>
<comment type="subcellular location">
    <subcellularLocation>
        <location evidence="7">Cell membrane</location>
        <topology evidence="7">Lipid-anchor</topology>
        <topology evidence="7">GPI-anchor</topology>
    </subcellularLocation>
</comment>
<comment type="miscellaneous">
    <text evidence="3">Present with 238 molecules/cell in log phase SD medium.</text>
</comment>
<comment type="similarity">
    <text evidence="7">Belongs to the SPS2 family.</text>
</comment>
<name>SPS2_YEAST</name>
<accession>P08459</accession>
<accession>D6VTE2</accession>
<evidence type="ECO:0000255" key="1"/>
<evidence type="ECO:0000256" key="2">
    <source>
        <dbReference type="SAM" id="MobiDB-lite"/>
    </source>
</evidence>
<evidence type="ECO:0000269" key="3">
    <source>
    </source>
</evidence>
<evidence type="ECO:0000269" key="4">
    <source>
    </source>
</evidence>
<evidence type="ECO:0000269" key="5">
    <source>
    </source>
</evidence>
<evidence type="ECO:0000269" key="6">
    <source>
    </source>
</evidence>
<evidence type="ECO:0000305" key="7"/>